<protein>
    <recommendedName>
        <fullName evidence="1">Putative pre-16S rRNA nuclease</fullName>
        <ecNumber evidence="1">3.1.-.-</ecNumber>
    </recommendedName>
</protein>
<gene>
    <name type="ordered locus">LBA0419</name>
</gene>
<keyword id="KW-0963">Cytoplasm</keyword>
<keyword id="KW-0378">Hydrolase</keyword>
<keyword id="KW-0540">Nuclease</keyword>
<keyword id="KW-1185">Reference proteome</keyword>
<keyword id="KW-0690">Ribosome biogenesis</keyword>
<comment type="function">
    <text evidence="1">Could be a nuclease involved in processing of the 5'-end of pre-16S rRNA.</text>
</comment>
<comment type="subcellular location">
    <subcellularLocation>
        <location evidence="1">Cytoplasm</location>
    </subcellularLocation>
</comment>
<comment type="similarity">
    <text evidence="1">Belongs to the YqgF nuclease family.</text>
</comment>
<evidence type="ECO:0000255" key="1">
    <source>
        <dbReference type="HAMAP-Rule" id="MF_00651"/>
    </source>
</evidence>
<dbReference type="EC" id="3.1.-.-" evidence="1"/>
<dbReference type="EMBL" id="CP000033">
    <property type="protein sequence ID" value="AAV42310.1"/>
    <property type="molecule type" value="Genomic_DNA"/>
</dbReference>
<dbReference type="RefSeq" id="YP_193341.1">
    <property type="nucleotide sequence ID" value="NC_006814.3"/>
</dbReference>
<dbReference type="SMR" id="Q5FLW4"/>
<dbReference type="STRING" id="272621.LBA0419"/>
<dbReference type="KEGG" id="lac:LBA0419"/>
<dbReference type="PATRIC" id="fig|272621.13.peg.404"/>
<dbReference type="eggNOG" id="COG0816">
    <property type="taxonomic scope" value="Bacteria"/>
</dbReference>
<dbReference type="HOGENOM" id="CLU_098240_2_0_9"/>
<dbReference type="OrthoDB" id="9796140at2"/>
<dbReference type="BioCyc" id="LACI272621:G1G49-413-MONOMER"/>
<dbReference type="Proteomes" id="UP000006381">
    <property type="component" value="Chromosome"/>
</dbReference>
<dbReference type="GO" id="GO:0005829">
    <property type="term" value="C:cytosol"/>
    <property type="evidence" value="ECO:0007669"/>
    <property type="project" value="TreeGrafter"/>
</dbReference>
<dbReference type="GO" id="GO:0004518">
    <property type="term" value="F:nuclease activity"/>
    <property type="evidence" value="ECO:0007669"/>
    <property type="project" value="UniProtKB-KW"/>
</dbReference>
<dbReference type="GO" id="GO:0000967">
    <property type="term" value="P:rRNA 5'-end processing"/>
    <property type="evidence" value="ECO:0007669"/>
    <property type="project" value="UniProtKB-UniRule"/>
</dbReference>
<dbReference type="CDD" id="cd16964">
    <property type="entry name" value="YqgF"/>
    <property type="match status" value="1"/>
</dbReference>
<dbReference type="Gene3D" id="3.30.420.140">
    <property type="entry name" value="YqgF/RNase H-like domain"/>
    <property type="match status" value="1"/>
</dbReference>
<dbReference type="HAMAP" id="MF_00651">
    <property type="entry name" value="Nuclease_YqgF"/>
    <property type="match status" value="1"/>
</dbReference>
<dbReference type="InterPro" id="IPR012337">
    <property type="entry name" value="RNaseH-like_sf"/>
</dbReference>
<dbReference type="InterPro" id="IPR005227">
    <property type="entry name" value="YqgF"/>
</dbReference>
<dbReference type="InterPro" id="IPR006641">
    <property type="entry name" value="YqgF/RNaseH-like_dom"/>
</dbReference>
<dbReference type="InterPro" id="IPR037027">
    <property type="entry name" value="YqgF/RNaseH-like_dom_sf"/>
</dbReference>
<dbReference type="NCBIfam" id="TIGR00250">
    <property type="entry name" value="RNAse_H_YqgF"/>
    <property type="match status" value="1"/>
</dbReference>
<dbReference type="PANTHER" id="PTHR33317">
    <property type="entry name" value="POLYNUCLEOTIDYL TRANSFERASE, RIBONUCLEASE H-LIKE SUPERFAMILY PROTEIN"/>
    <property type="match status" value="1"/>
</dbReference>
<dbReference type="PANTHER" id="PTHR33317:SF4">
    <property type="entry name" value="POLYNUCLEOTIDYL TRANSFERASE, RIBONUCLEASE H-LIKE SUPERFAMILY PROTEIN"/>
    <property type="match status" value="1"/>
</dbReference>
<dbReference type="Pfam" id="PF03652">
    <property type="entry name" value="RuvX"/>
    <property type="match status" value="1"/>
</dbReference>
<dbReference type="SMART" id="SM00732">
    <property type="entry name" value="YqgFc"/>
    <property type="match status" value="1"/>
</dbReference>
<dbReference type="SUPFAM" id="SSF53098">
    <property type="entry name" value="Ribonuclease H-like"/>
    <property type="match status" value="1"/>
</dbReference>
<organism>
    <name type="scientific">Lactobacillus acidophilus (strain ATCC 700396 / NCK56 / N2 / NCFM)</name>
    <dbReference type="NCBI Taxonomy" id="272621"/>
    <lineage>
        <taxon>Bacteria</taxon>
        <taxon>Bacillati</taxon>
        <taxon>Bacillota</taxon>
        <taxon>Bacilli</taxon>
        <taxon>Lactobacillales</taxon>
        <taxon>Lactobacillaceae</taxon>
        <taxon>Lactobacillus</taxon>
    </lineage>
</organism>
<name>YQGF_LACAC</name>
<accession>Q5FLW4</accession>
<sequence length="142" mass="16160">MRLLGLDVGSKTVGVAISDELGITAQKLETIQIDETKYNFGMRPLKKLVRQYDVDGFVLGLPKNMDGTSGNSVARSKAYGKRLEEKFNLPVYYSDERLTTIESRRVLIEDAGMHDRKKRKQVIDQMAAVLILQNYLDLHRKD</sequence>
<proteinExistence type="inferred from homology"/>
<reference key="1">
    <citation type="journal article" date="2005" name="Proc. Natl. Acad. Sci. U.S.A.">
        <title>Complete genome sequence of the probiotic lactic acid bacterium Lactobacillus acidophilus NCFM.</title>
        <authorList>
            <person name="Altermann E."/>
            <person name="Russell W.M."/>
            <person name="Azcarate-Peril M.A."/>
            <person name="Barrangou R."/>
            <person name="Buck B.L."/>
            <person name="McAuliffe O."/>
            <person name="Souther N."/>
            <person name="Dobson A."/>
            <person name="Duong T."/>
            <person name="Callanan M."/>
            <person name="Lick S."/>
            <person name="Hamrick A."/>
            <person name="Cano R."/>
            <person name="Klaenhammer T.R."/>
        </authorList>
    </citation>
    <scope>NUCLEOTIDE SEQUENCE [LARGE SCALE GENOMIC DNA]</scope>
    <source>
        <strain>ATCC 700396 / NCK56 / N2 / NCFM</strain>
    </source>
</reference>
<feature type="chain" id="PRO_0000172076" description="Putative pre-16S rRNA nuclease">
    <location>
        <begin position="1"/>
        <end position="142"/>
    </location>
</feature>